<proteinExistence type="inferred from homology"/>
<organism>
    <name type="scientific">Haemophilus influenzae (strain ATCC 51907 / DSM 11121 / KW20 / Rd)</name>
    <dbReference type="NCBI Taxonomy" id="71421"/>
    <lineage>
        <taxon>Bacteria</taxon>
        <taxon>Pseudomonadati</taxon>
        <taxon>Pseudomonadota</taxon>
        <taxon>Gammaproteobacteria</taxon>
        <taxon>Pasteurellales</taxon>
        <taxon>Pasteurellaceae</taxon>
        <taxon>Haemophilus</taxon>
    </lineage>
</organism>
<dbReference type="EC" id="2.7.3.9" evidence="1"/>
<dbReference type="EMBL" id="L42023">
    <property type="protein sequence ID" value="AAC23357.1"/>
    <property type="molecule type" value="Genomic_DNA"/>
</dbReference>
<dbReference type="PIR" id="H64137">
    <property type="entry name" value="H64137"/>
</dbReference>
<dbReference type="RefSeq" id="NP_439854.1">
    <property type="nucleotide sequence ID" value="NC_000907.1"/>
</dbReference>
<dbReference type="SMR" id="P43922"/>
<dbReference type="STRING" id="71421.HI_1712"/>
<dbReference type="EnsemblBacteria" id="AAC23357">
    <property type="protein sequence ID" value="AAC23357"/>
    <property type="gene ID" value="HI_1712"/>
</dbReference>
<dbReference type="KEGG" id="hin:HI_1712"/>
<dbReference type="PATRIC" id="fig|71421.8.peg.1791"/>
<dbReference type="eggNOG" id="COG1080">
    <property type="taxonomic scope" value="Bacteria"/>
</dbReference>
<dbReference type="HOGENOM" id="CLU_007308_7_0_6"/>
<dbReference type="OrthoDB" id="9765468at2"/>
<dbReference type="PhylomeDB" id="P43922"/>
<dbReference type="BioCyc" id="HINF71421:G1GJ1-1727-MONOMER"/>
<dbReference type="Proteomes" id="UP000000579">
    <property type="component" value="Chromosome"/>
</dbReference>
<dbReference type="GO" id="GO:0005737">
    <property type="term" value="C:cytoplasm"/>
    <property type="evidence" value="ECO:0007669"/>
    <property type="project" value="UniProtKB-SubCell"/>
</dbReference>
<dbReference type="GO" id="GO:0016301">
    <property type="term" value="F:kinase activity"/>
    <property type="evidence" value="ECO:0007669"/>
    <property type="project" value="UniProtKB-KW"/>
</dbReference>
<dbReference type="GO" id="GO:0046872">
    <property type="term" value="F:metal ion binding"/>
    <property type="evidence" value="ECO:0007669"/>
    <property type="project" value="UniProtKB-KW"/>
</dbReference>
<dbReference type="GO" id="GO:0008965">
    <property type="term" value="F:phosphoenolpyruvate-protein phosphotransferase activity"/>
    <property type="evidence" value="ECO:0000318"/>
    <property type="project" value="GO_Central"/>
</dbReference>
<dbReference type="GO" id="GO:0015764">
    <property type="term" value="P:N-acetylglucosamine transport"/>
    <property type="evidence" value="ECO:0000318"/>
    <property type="project" value="GO_Central"/>
</dbReference>
<dbReference type="GO" id="GO:0009401">
    <property type="term" value="P:phosphoenolpyruvate-dependent sugar phosphotransferase system"/>
    <property type="evidence" value="ECO:0007669"/>
    <property type="project" value="UniProtKB-KW"/>
</dbReference>
<dbReference type="FunFam" id="1.10.274.10:FF:000001">
    <property type="entry name" value="Phosphoenolpyruvate-protein phosphotransferase"/>
    <property type="match status" value="1"/>
</dbReference>
<dbReference type="FunFam" id="3.20.20.60:FF:000007">
    <property type="entry name" value="Phosphoenolpyruvate-protein phosphotransferase"/>
    <property type="match status" value="1"/>
</dbReference>
<dbReference type="Gene3D" id="3.20.20.60">
    <property type="entry name" value="Phosphoenolpyruvate-binding domains"/>
    <property type="match status" value="1"/>
</dbReference>
<dbReference type="Gene3D" id="3.50.30.10">
    <property type="entry name" value="Phosphohistidine domain"/>
    <property type="match status" value="1"/>
</dbReference>
<dbReference type="Gene3D" id="1.10.274.10">
    <property type="entry name" value="PtsI, HPr-binding domain"/>
    <property type="match status" value="1"/>
</dbReference>
<dbReference type="InterPro" id="IPR008279">
    <property type="entry name" value="PEP-util_enz_mobile_dom"/>
</dbReference>
<dbReference type="InterPro" id="IPR050499">
    <property type="entry name" value="PEP-utilizing_PTS_enzyme"/>
</dbReference>
<dbReference type="InterPro" id="IPR018274">
    <property type="entry name" value="PEP_util_AS"/>
</dbReference>
<dbReference type="InterPro" id="IPR000121">
    <property type="entry name" value="PEP_util_C"/>
</dbReference>
<dbReference type="InterPro" id="IPR023151">
    <property type="entry name" value="PEP_util_CS"/>
</dbReference>
<dbReference type="InterPro" id="IPR036637">
    <property type="entry name" value="Phosphohistidine_dom_sf"/>
</dbReference>
<dbReference type="InterPro" id="IPR024692">
    <property type="entry name" value="PTS_EI"/>
</dbReference>
<dbReference type="InterPro" id="IPR006318">
    <property type="entry name" value="PTS_EI-like"/>
</dbReference>
<dbReference type="InterPro" id="IPR008731">
    <property type="entry name" value="PTS_EIN"/>
</dbReference>
<dbReference type="InterPro" id="IPR036618">
    <property type="entry name" value="PtsI_HPr-bd_sf"/>
</dbReference>
<dbReference type="InterPro" id="IPR015813">
    <property type="entry name" value="Pyrv/PenolPyrv_kinase-like_dom"/>
</dbReference>
<dbReference type="InterPro" id="IPR040442">
    <property type="entry name" value="Pyrv_kinase-like_dom_sf"/>
</dbReference>
<dbReference type="NCBIfam" id="NF008382">
    <property type="entry name" value="PRK11177.1"/>
    <property type="match status" value="1"/>
</dbReference>
<dbReference type="NCBIfam" id="TIGR01417">
    <property type="entry name" value="PTS_I_fam"/>
    <property type="match status" value="1"/>
</dbReference>
<dbReference type="PANTHER" id="PTHR46244">
    <property type="entry name" value="PHOSPHOENOLPYRUVATE-PROTEIN PHOSPHOTRANSFERASE"/>
    <property type="match status" value="1"/>
</dbReference>
<dbReference type="PANTHER" id="PTHR46244:SF6">
    <property type="entry name" value="PHOSPHOENOLPYRUVATE-PROTEIN PHOSPHOTRANSFERASE"/>
    <property type="match status" value="1"/>
</dbReference>
<dbReference type="Pfam" id="PF05524">
    <property type="entry name" value="PEP-utilisers_N"/>
    <property type="match status" value="1"/>
</dbReference>
<dbReference type="Pfam" id="PF00391">
    <property type="entry name" value="PEP-utilizers"/>
    <property type="match status" value="1"/>
</dbReference>
<dbReference type="Pfam" id="PF02896">
    <property type="entry name" value="PEP-utilizers_C"/>
    <property type="match status" value="1"/>
</dbReference>
<dbReference type="PIRSF" id="PIRSF000732">
    <property type="entry name" value="PTS_enzyme_I"/>
    <property type="match status" value="1"/>
</dbReference>
<dbReference type="PRINTS" id="PR01736">
    <property type="entry name" value="PHPHTRNFRASE"/>
</dbReference>
<dbReference type="SUPFAM" id="SSF47831">
    <property type="entry name" value="Enzyme I of the PEP:sugar phosphotransferase system HPr-binding (sub)domain"/>
    <property type="match status" value="1"/>
</dbReference>
<dbReference type="SUPFAM" id="SSF51621">
    <property type="entry name" value="Phosphoenolpyruvate/pyruvate domain"/>
    <property type="match status" value="1"/>
</dbReference>
<dbReference type="SUPFAM" id="SSF52009">
    <property type="entry name" value="Phosphohistidine domain"/>
    <property type="match status" value="1"/>
</dbReference>
<dbReference type="PROSITE" id="PS00742">
    <property type="entry name" value="PEP_ENZYMES_2"/>
    <property type="match status" value="1"/>
</dbReference>
<dbReference type="PROSITE" id="PS00370">
    <property type="entry name" value="PEP_ENZYMES_PHOS_SITE"/>
    <property type="match status" value="1"/>
</dbReference>
<reference key="1">
    <citation type="journal article" date="1995" name="Science">
        <title>Whole-genome random sequencing and assembly of Haemophilus influenzae Rd.</title>
        <authorList>
            <person name="Fleischmann R.D."/>
            <person name="Adams M.D."/>
            <person name="White O."/>
            <person name="Clayton R.A."/>
            <person name="Kirkness E.F."/>
            <person name="Kerlavage A.R."/>
            <person name="Bult C.J."/>
            <person name="Tomb J.-F."/>
            <person name="Dougherty B.A."/>
            <person name="Merrick J.M."/>
            <person name="McKenney K."/>
            <person name="Sutton G.G."/>
            <person name="FitzHugh W."/>
            <person name="Fields C.A."/>
            <person name="Gocayne J.D."/>
            <person name="Scott J.D."/>
            <person name="Shirley R."/>
            <person name="Liu L.-I."/>
            <person name="Glodek A."/>
            <person name="Kelley J.M."/>
            <person name="Weidman J.F."/>
            <person name="Phillips C.A."/>
            <person name="Spriggs T."/>
            <person name="Hedblom E."/>
            <person name="Cotton M.D."/>
            <person name="Utterback T.R."/>
            <person name="Hanna M.C."/>
            <person name="Nguyen D.T."/>
            <person name="Saudek D.M."/>
            <person name="Brandon R.C."/>
            <person name="Fine L.D."/>
            <person name="Fritchman J.L."/>
            <person name="Fuhrmann J.L."/>
            <person name="Geoghagen N.S.M."/>
            <person name="Gnehm C.L."/>
            <person name="McDonald L.A."/>
            <person name="Small K.V."/>
            <person name="Fraser C.M."/>
            <person name="Smith H.O."/>
            <person name="Venter J.C."/>
        </authorList>
    </citation>
    <scope>NUCLEOTIDE SEQUENCE [LARGE SCALE GENOMIC DNA]</scope>
    <source>
        <strain>ATCC 51907 / DSM 11121 / KW20 / Rd</strain>
    </source>
</reference>
<comment type="function">
    <text evidence="1">General (non sugar-specific) component of the phosphoenolpyruvate-dependent sugar phosphotransferase system (sugar PTS). This major carbohydrate active-transport system catalyzes the phosphorylation of incoming sugar substrates concomitantly with their translocation across the cell membrane. Enzyme I transfers the phosphoryl group from phosphoenolpyruvate (PEP) to the phosphoryl carrier protein (HPr).</text>
</comment>
<comment type="catalytic activity">
    <reaction evidence="1">
        <text>L-histidyl-[protein] + phosphoenolpyruvate = N(pros)-phospho-L-histidyl-[protein] + pyruvate</text>
        <dbReference type="Rhea" id="RHEA:23880"/>
        <dbReference type="Rhea" id="RHEA-COMP:9745"/>
        <dbReference type="Rhea" id="RHEA-COMP:9746"/>
        <dbReference type="ChEBI" id="CHEBI:15361"/>
        <dbReference type="ChEBI" id="CHEBI:29979"/>
        <dbReference type="ChEBI" id="CHEBI:58702"/>
        <dbReference type="ChEBI" id="CHEBI:64837"/>
        <dbReference type="EC" id="2.7.3.9"/>
    </reaction>
</comment>
<comment type="cofactor">
    <cofactor evidence="1">
        <name>Mg(2+)</name>
        <dbReference type="ChEBI" id="CHEBI:18420"/>
    </cofactor>
</comment>
<comment type="subunit">
    <text evidence="1">Homodimer.</text>
</comment>
<comment type="subcellular location">
    <subcellularLocation>
        <location evidence="3">Cytoplasm</location>
    </subcellularLocation>
</comment>
<comment type="domain">
    <text evidence="1">The N-terminal domain contains the HPr binding site, the central domain the pyrophosphate/phosphate carrier histidine, and the C-terminal domain the pyruvate binding site.</text>
</comment>
<comment type="miscellaneous">
    <text evidence="1">The reaction takes place in three steps, mediated by a phosphocarrier histidine residue located on the surface of the central domain. The two first partial reactions are catalyzed at an active site located on the N-terminal domain, and the third partial reaction is catalyzed at an active site located on the C-terminal domain. For catalytic turnover, the central domain swivels from the concave surface of the N-terminal domain to that of the C-terminal domain.</text>
</comment>
<comment type="similarity">
    <text evidence="3">Belongs to the PEP-utilizing enzyme family.</text>
</comment>
<protein>
    <recommendedName>
        <fullName evidence="1">Phosphoenolpyruvate-protein phosphotransferase</fullName>
        <ecNumber evidence="1">2.7.3.9</ecNumber>
    </recommendedName>
    <alternativeName>
        <fullName evidence="1">Phosphotransferase system, enzyme I</fullName>
    </alternativeName>
</protein>
<sequence>MISGILASPGIAFGKALVLKEEKIVLDTQKITDDQIDAEVARFYEGRNAAVEQLNSIRERALISLGEEKAAIFEGHLMILEDEELEEEILDYLRSNKVNAGVAASKILDQQVTMLSEIDDEYLKERAGDIRDIANRLVKNILGMYIVDLGDIQEESILVAYDLTPSETAQLNLEKVLGVVTDIGGRTSHTSIMARSLELPAIVGTNKVTKLVNTGDYLILDAINNQVYINPTASQIDELKALEAKISEEKAELAKLKDLPAITLDGHKVDVVANIGTIRDCDGAERNGAEGIGLYRTEFLFMDREQLPTEEEQFIAYKQVVEAMNGRLTVIRTMDIGGDKELSYLDLPKEMNPFLGWRAIRIALDRREILNAQLRAVLRASAFGKLAVMFPMIISVEEIRELKAVIETLKAELREEGRLFDNNIQVGVMVETPSAAVNAKFLAKEVDFFSIGTNDLTQYTLAVDRGNEFISHLYNPMHPSVLGLIKQVIDASHAEGKWTGMCGELAGDERATLLLLGMGLDEFSMSAISVPRIKKLIRNVNFQDAKVLADTALQKPTAAEIDQLIEEFLLENSLN</sequence>
<feature type="chain" id="PRO_0000147069" description="Phosphoenolpyruvate-protein phosphotransferase">
    <location>
        <begin position="1"/>
        <end position="575"/>
    </location>
</feature>
<feature type="active site" description="Tele-phosphohistidine intermediate" evidence="1">
    <location>
        <position position="189"/>
    </location>
</feature>
<feature type="active site" description="Proton donor" evidence="1">
    <location>
        <position position="502"/>
    </location>
</feature>
<feature type="binding site" evidence="2">
    <location>
        <position position="296"/>
    </location>
    <ligand>
        <name>phosphoenolpyruvate</name>
        <dbReference type="ChEBI" id="CHEBI:58702"/>
    </ligand>
</feature>
<feature type="binding site" evidence="1">
    <location>
        <position position="332"/>
    </location>
    <ligand>
        <name>phosphoenolpyruvate</name>
        <dbReference type="ChEBI" id="CHEBI:58702"/>
    </ligand>
</feature>
<feature type="binding site" evidence="1">
    <location>
        <position position="431"/>
    </location>
    <ligand>
        <name>Mg(2+)</name>
        <dbReference type="ChEBI" id="CHEBI:18420"/>
    </ligand>
</feature>
<feature type="binding site" evidence="1">
    <location>
        <begin position="454"/>
        <end position="455"/>
    </location>
    <ligand>
        <name>phosphoenolpyruvate</name>
        <dbReference type="ChEBI" id="CHEBI:58702"/>
    </ligand>
</feature>
<feature type="binding site" evidence="1">
    <location>
        <position position="455"/>
    </location>
    <ligand>
        <name>Mg(2+)</name>
        <dbReference type="ChEBI" id="CHEBI:18420"/>
    </ligand>
</feature>
<feature type="binding site" evidence="2">
    <location>
        <position position="465"/>
    </location>
    <ligand>
        <name>phosphoenolpyruvate</name>
        <dbReference type="ChEBI" id="CHEBI:58702"/>
    </ligand>
</feature>
<gene>
    <name type="primary">ptsI</name>
    <name type="ordered locus">HI_1712</name>
</gene>
<evidence type="ECO:0000250" key="1">
    <source>
        <dbReference type="UniProtKB" id="P08839"/>
    </source>
</evidence>
<evidence type="ECO:0000250" key="2">
    <source>
        <dbReference type="UniProtKB" id="P23533"/>
    </source>
</evidence>
<evidence type="ECO:0000305" key="3"/>
<accession>P43922</accession>
<name>PT1_HAEIN</name>
<keyword id="KW-0963">Cytoplasm</keyword>
<keyword id="KW-0418">Kinase</keyword>
<keyword id="KW-0460">Magnesium</keyword>
<keyword id="KW-0479">Metal-binding</keyword>
<keyword id="KW-0598">Phosphotransferase system</keyword>
<keyword id="KW-1185">Reference proteome</keyword>
<keyword id="KW-0762">Sugar transport</keyword>
<keyword id="KW-0808">Transferase</keyword>
<keyword id="KW-0813">Transport</keyword>